<dbReference type="EC" id="4.2.1.11" evidence="1"/>
<dbReference type="EMBL" id="CP000777">
    <property type="protein sequence ID" value="ABZ94159.1"/>
    <property type="molecule type" value="Genomic_DNA"/>
</dbReference>
<dbReference type="RefSeq" id="WP_012388688.1">
    <property type="nucleotide sequence ID" value="NC_010842.1"/>
</dbReference>
<dbReference type="SMR" id="B0S8S8"/>
<dbReference type="KEGG" id="lbf:LBF_1652"/>
<dbReference type="HOGENOM" id="CLU_031223_2_1_12"/>
<dbReference type="UniPathway" id="UPA00109">
    <property type="reaction ID" value="UER00187"/>
</dbReference>
<dbReference type="GO" id="GO:0009986">
    <property type="term" value="C:cell surface"/>
    <property type="evidence" value="ECO:0007669"/>
    <property type="project" value="UniProtKB-SubCell"/>
</dbReference>
<dbReference type="GO" id="GO:0005576">
    <property type="term" value="C:extracellular region"/>
    <property type="evidence" value="ECO:0007669"/>
    <property type="project" value="UniProtKB-SubCell"/>
</dbReference>
<dbReference type="GO" id="GO:0000015">
    <property type="term" value="C:phosphopyruvate hydratase complex"/>
    <property type="evidence" value="ECO:0007669"/>
    <property type="project" value="InterPro"/>
</dbReference>
<dbReference type="GO" id="GO:0000287">
    <property type="term" value="F:magnesium ion binding"/>
    <property type="evidence" value="ECO:0007669"/>
    <property type="project" value="UniProtKB-UniRule"/>
</dbReference>
<dbReference type="GO" id="GO:0004634">
    <property type="term" value="F:phosphopyruvate hydratase activity"/>
    <property type="evidence" value="ECO:0007669"/>
    <property type="project" value="UniProtKB-UniRule"/>
</dbReference>
<dbReference type="GO" id="GO:0006096">
    <property type="term" value="P:glycolytic process"/>
    <property type="evidence" value="ECO:0007669"/>
    <property type="project" value="UniProtKB-UniRule"/>
</dbReference>
<dbReference type="CDD" id="cd03313">
    <property type="entry name" value="enolase"/>
    <property type="match status" value="1"/>
</dbReference>
<dbReference type="FunFam" id="3.20.20.120:FF:000001">
    <property type="entry name" value="Enolase"/>
    <property type="match status" value="1"/>
</dbReference>
<dbReference type="FunFam" id="3.30.390.10:FF:000001">
    <property type="entry name" value="Enolase"/>
    <property type="match status" value="1"/>
</dbReference>
<dbReference type="Gene3D" id="3.20.20.120">
    <property type="entry name" value="Enolase-like C-terminal domain"/>
    <property type="match status" value="1"/>
</dbReference>
<dbReference type="Gene3D" id="3.30.390.10">
    <property type="entry name" value="Enolase-like, N-terminal domain"/>
    <property type="match status" value="1"/>
</dbReference>
<dbReference type="HAMAP" id="MF_00318">
    <property type="entry name" value="Enolase"/>
    <property type="match status" value="1"/>
</dbReference>
<dbReference type="InterPro" id="IPR000941">
    <property type="entry name" value="Enolase"/>
</dbReference>
<dbReference type="InterPro" id="IPR036849">
    <property type="entry name" value="Enolase-like_C_sf"/>
</dbReference>
<dbReference type="InterPro" id="IPR029017">
    <property type="entry name" value="Enolase-like_N"/>
</dbReference>
<dbReference type="InterPro" id="IPR020810">
    <property type="entry name" value="Enolase_C"/>
</dbReference>
<dbReference type="InterPro" id="IPR020809">
    <property type="entry name" value="Enolase_CS"/>
</dbReference>
<dbReference type="InterPro" id="IPR020811">
    <property type="entry name" value="Enolase_N"/>
</dbReference>
<dbReference type="NCBIfam" id="TIGR01060">
    <property type="entry name" value="eno"/>
    <property type="match status" value="1"/>
</dbReference>
<dbReference type="PANTHER" id="PTHR11902">
    <property type="entry name" value="ENOLASE"/>
    <property type="match status" value="1"/>
</dbReference>
<dbReference type="PANTHER" id="PTHR11902:SF1">
    <property type="entry name" value="ENOLASE"/>
    <property type="match status" value="1"/>
</dbReference>
<dbReference type="Pfam" id="PF00113">
    <property type="entry name" value="Enolase_C"/>
    <property type="match status" value="1"/>
</dbReference>
<dbReference type="Pfam" id="PF03952">
    <property type="entry name" value="Enolase_N"/>
    <property type="match status" value="1"/>
</dbReference>
<dbReference type="PIRSF" id="PIRSF001400">
    <property type="entry name" value="Enolase"/>
    <property type="match status" value="1"/>
</dbReference>
<dbReference type="PRINTS" id="PR00148">
    <property type="entry name" value="ENOLASE"/>
</dbReference>
<dbReference type="SFLD" id="SFLDF00002">
    <property type="entry name" value="enolase"/>
    <property type="match status" value="1"/>
</dbReference>
<dbReference type="SFLD" id="SFLDG00178">
    <property type="entry name" value="enolase"/>
    <property type="match status" value="1"/>
</dbReference>
<dbReference type="SMART" id="SM01192">
    <property type="entry name" value="Enolase_C"/>
    <property type="match status" value="1"/>
</dbReference>
<dbReference type="SMART" id="SM01193">
    <property type="entry name" value="Enolase_N"/>
    <property type="match status" value="1"/>
</dbReference>
<dbReference type="SUPFAM" id="SSF51604">
    <property type="entry name" value="Enolase C-terminal domain-like"/>
    <property type="match status" value="1"/>
</dbReference>
<dbReference type="SUPFAM" id="SSF54826">
    <property type="entry name" value="Enolase N-terminal domain-like"/>
    <property type="match status" value="1"/>
</dbReference>
<dbReference type="PROSITE" id="PS00164">
    <property type="entry name" value="ENOLASE"/>
    <property type="match status" value="1"/>
</dbReference>
<sequence length="433" mass="46736">MSQKDSIRSVRAREIMDSRGNPTVEVDVTLEDGSFGRAAVPSGASTGEHEAVELRDGDKKRYGGKGVQKAVDNVNAKISKSILGLSATDQLQIDGTMIALDGTANKSKLGANAILGVSMAVAKAAAVHAGLPLYRYIGGTFARELPVPMMNIINGGAHADNNIDFQEFMILPVSAPNFKEALRMGAEVFHSLKTVLKGKGLNTAVGDEGGFAPNLTSNSEAIEVILTAIEKAGYKPDLDIKIGLDCAASEFYDEKKKKYILKAEKKPEKTAEELVEYYSNLVSKYPIITMEDGLDENDWSGWKKLSEKLGKKIQLVGDDLFVTNIKKLAQGIDKGIGNSILIKVNQIGSLTETLSAIEMAKKAQYTAVVSHRSGETEDATISHIAVATNSGQIKTGSLSRTDRIAKYNELLRIEEELGKNATYSGVNTFYNLR</sequence>
<feature type="chain" id="PRO_1000115878" description="Enolase">
    <location>
        <begin position="1"/>
        <end position="433"/>
    </location>
</feature>
<feature type="region of interest" description="Disordered" evidence="2">
    <location>
        <begin position="37"/>
        <end position="59"/>
    </location>
</feature>
<feature type="compositionally biased region" description="Basic and acidic residues" evidence="2">
    <location>
        <begin position="47"/>
        <end position="59"/>
    </location>
</feature>
<feature type="active site" description="Proton donor" evidence="1">
    <location>
        <position position="208"/>
    </location>
</feature>
<feature type="active site" description="Proton acceptor" evidence="1">
    <location>
        <position position="343"/>
    </location>
</feature>
<feature type="binding site" evidence="1">
    <location>
        <position position="166"/>
    </location>
    <ligand>
        <name>(2R)-2-phosphoglycerate</name>
        <dbReference type="ChEBI" id="CHEBI:58289"/>
    </ligand>
</feature>
<feature type="binding site" evidence="1">
    <location>
        <position position="245"/>
    </location>
    <ligand>
        <name>Mg(2+)</name>
        <dbReference type="ChEBI" id="CHEBI:18420"/>
    </ligand>
</feature>
<feature type="binding site" evidence="1">
    <location>
        <position position="291"/>
    </location>
    <ligand>
        <name>Mg(2+)</name>
        <dbReference type="ChEBI" id="CHEBI:18420"/>
    </ligand>
</feature>
<feature type="binding site" evidence="1">
    <location>
        <position position="318"/>
    </location>
    <ligand>
        <name>Mg(2+)</name>
        <dbReference type="ChEBI" id="CHEBI:18420"/>
    </ligand>
</feature>
<feature type="binding site" evidence="1">
    <location>
        <position position="343"/>
    </location>
    <ligand>
        <name>(2R)-2-phosphoglycerate</name>
        <dbReference type="ChEBI" id="CHEBI:58289"/>
    </ligand>
</feature>
<feature type="binding site" evidence="1">
    <location>
        <position position="372"/>
    </location>
    <ligand>
        <name>(2R)-2-phosphoglycerate</name>
        <dbReference type="ChEBI" id="CHEBI:58289"/>
    </ligand>
</feature>
<feature type="binding site" evidence="1">
    <location>
        <position position="373"/>
    </location>
    <ligand>
        <name>(2R)-2-phosphoglycerate</name>
        <dbReference type="ChEBI" id="CHEBI:58289"/>
    </ligand>
</feature>
<feature type="binding site" evidence="1">
    <location>
        <position position="394"/>
    </location>
    <ligand>
        <name>(2R)-2-phosphoglycerate</name>
        <dbReference type="ChEBI" id="CHEBI:58289"/>
    </ligand>
</feature>
<keyword id="KW-0963">Cytoplasm</keyword>
<keyword id="KW-0324">Glycolysis</keyword>
<keyword id="KW-0456">Lyase</keyword>
<keyword id="KW-0460">Magnesium</keyword>
<keyword id="KW-0479">Metal-binding</keyword>
<keyword id="KW-0964">Secreted</keyword>
<reference key="1">
    <citation type="journal article" date="2008" name="PLoS ONE">
        <title>Genome sequence of the saprophyte Leptospira biflexa provides insights into the evolution of Leptospira and the pathogenesis of leptospirosis.</title>
        <authorList>
            <person name="Picardeau M."/>
            <person name="Bulach D.M."/>
            <person name="Bouchier C."/>
            <person name="Zuerner R.L."/>
            <person name="Zidane N."/>
            <person name="Wilson P.J."/>
            <person name="Creno S."/>
            <person name="Kuczek E.S."/>
            <person name="Bommezzadri S."/>
            <person name="Davis J.C."/>
            <person name="McGrath A."/>
            <person name="Johnson M.J."/>
            <person name="Boursaux-Eude C."/>
            <person name="Seemann T."/>
            <person name="Rouy Z."/>
            <person name="Coppel R.L."/>
            <person name="Rood J.I."/>
            <person name="Lajus A."/>
            <person name="Davies J.K."/>
            <person name="Medigue C."/>
            <person name="Adler B."/>
        </authorList>
    </citation>
    <scope>NUCLEOTIDE SEQUENCE [LARGE SCALE GENOMIC DNA]</scope>
    <source>
        <strain>Patoc 1 / Ames</strain>
    </source>
</reference>
<gene>
    <name evidence="1" type="primary">eno</name>
    <name type="ordered locus">LBF_1652</name>
</gene>
<organism>
    <name type="scientific">Leptospira biflexa serovar Patoc (strain Patoc 1 / Ames)</name>
    <dbReference type="NCBI Taxonomy" id="355278"/>
    <lineage>
        <taxon>Bacteria</taxon>
        <taxon>Pseudomonadati</taxon>
        <taxon>Spirochaetota</taxon>
        <taxon>Spirochaetia</taxon>
        <taxon>Leptospirales</taxon>
        <taxon>Leptospiraceae</taxon>
        <taxon>Leptospira</taxon>
    </lineage>
</organism>
<proteinExistence type="inferred from homology"/>
<evidence type="ECO:0000255" key="1">
    <source>
        <dbReference type="HAMAP-Rule" id="MF_00318"/>
    </source>
</evidence>
<evidence type="ECO:0000256" key="2">
    <source>
        <dbReference type="SAM" id="MobiDB-lite"/>
    </source>
</evidence>
<name>ENO_LEPBA</name>
<accession>B0S8S8</accession>
<protein>
    <recommendedName>
        <fullName evidence="1">Enolase</fullName>
        <ecNumber evidence="1">4.2.1.11</ecNumber>
    </recommendedName>
    <alternativeName>
        <fullName evidence="1">2-phospho-D-glycerate hydro-lyase</fullName>
    </alternativeName>
    <alternativeName>
        <fullName evidence="1">2-phosphoglycerate dehydratase</fullName>
    </alternativeName>
</protein>
<comment type="function">
    <text evidence="1">Catalyzes the reversible conversion of 2-phosphoglycerate (2-PG) into phosphoenolpyruvate (PEP). It is essential for the degradation of carbohydrates via glycolysis.</text>
</comment>
<comment type="catalytic activity">
    <reaction evidence="1">
        <text>(2R)-2-phosphoglycerate = phosphoenolpyruvate + H2O</text>
        <dbReference type="Rhea" id="RHEA:10164"/>
        <dbReference type="ChEBI" id="CHEBI:15377"/>
        <dbReference type="ChEBI" id="CHEBI:58289"/>
        <dbReference type="ChEBI" id="CHEBI:58702"/>
        <dbReference type="EC" id="4.2.1.11"/>
    </reaction>
</comment>
<comment type="cofactor">
    <cofactor evidence="1">
        <name>Mg(2+)</name>
        <dbReference type="ChEBI" id="CHEBI:18420"/>
    </cofactor>
    <text evidence="1">Binds a second Mg(2+) ion via substrate during catalysis.</text>
</comment>
<comment type="pathway">
    <text evidence="1">Carbohydrate degradation; glycolysis; pyruvate from D-glyceraldehyde 3-phosphate: step 4/5.</text>
</comment>
<comment type="subcellular location">
    <subcellularLocation>
        <location evidence="1">Cytoplasm</location>
    </subcellularLocation>
    <subcellularLocation>
        <location evidence="1">Secreted</location>
    </subcellularLocation>
    <subcellularLocation>
        <location evidence="1">Cell surface</location>
    </subcellularLocation>
    <text evidence="1">Fractions of enolase are present in both the cytoplasm and on the cell surface.</text>
</comment>
<comment type="similarity">
    <text evidence="1">Belongs to the enolase family.</text>
</comment>